<dbReference type="EC" id="1.15.1.1"/>
<dbReference type="EMBL" id="X16453">
    <property type="protein sequence ID" value="CAA34472.1"/>
    <property type="molecule type" value="Genomic_DNA"/>
</dbReference>
<dbReference type="EMBL" id="AL583917">
    <property type="protein sequence ID" value="CAC29580.1"/>
    <property type="molecule type" value="Genomic_DNA"/>
</dbReference>
<dbReference type="PIR" id="S06599">
    <property type="entry name" value="S06599"/>
</dbReference>
<dbReference type="RefSeq" id="NP_301180.1">
    <property type="nucleotide sequence ID" value="NC_002677.1"/>
</dbReference>
<dbReference type="RefSeq" id="WP_010907505.1">
    <property type="nucleotide sequence ID" value="NC_002677.1"/>
</dbReference>
<dbReference type="SMR" id="P13367"/>
<dbReference type="STRING" id="272631.gene:17573884"/>
<dbReference type="KEGG" id="mle:ML0072"/>
<dbReference type="PATRIC" id="fig|272631.5.peg.111"/>
<dbReference type="Leproma" id="ML0072"/>
<dbReference type="eggNOG" id="COG0605">
    <property type="taxonomic scope" value="Bacteria"/>
</dbReference>
<dbReference type="HOGENOM" id="CLU_031625_2_2_11"/>
<dbReference type="OrthoDB" id="9803125at2"/>
<dbReference type="Proteomes" id="UP000000806">
    <property type="component" value="Chromosome"/>
</dbReference>
<dbReference type="GO" id="GO:0046872">
    <property type="term" value="F:metal ion binding"/>
    <property type="evidence" value="ECO:0007669"/>
    <property type="project" value="UniProtKB-KW"/>
</dbReference>
<dbReference type="GO" id="GO:0004784">
    <property type="term" value="F:superoxide dismutase activity"/>
    <property type="evidence" value="ECO:0007669"/>
    <property type="project" value="UniProtKB-EC"/>
</dbReference>
<dbReference type="FunFam" id="1.10.287.990:FF:000001">
    <property type="entry name" value="Superoxide dismutase"/>
    <property type="match status" value="1"/>
</dbReference>
<dbReference type="FunFam" id="3.55.40.20:FF:000004">
    <property type="entry name" value="Superoxide dismutase [Fe]"/>
    <property type="match status" value="1"/>
</dbReference>
<dbReference type="Gene3D" id="1.10.287.990">
    <property type="entry name" value="Fe,Mn superoxide dismutase (SOD) domain"/>
    <property type="match status" value="1"/>
</dbReference>
<dbReference type="Gene3D" id="3.55.40.20">
    <property type="entry name" value="Iron/manganese superoxide dismutase, C-terminal domain"/>
    <property type="match status" value="1"/>
</dbReference>
<dbReference type="InterPro" id="IPR050265">
    <property type="entry name" value="Fe/Mn_Superoxide_Dismutase"/>
</dbReference>
<dbReference type="InterPro" id="IPR001189">
    <property type="entry name" value="Mn/Fe_SOD"/>
</dbReference>
<dbReference type="InterPro" id="IPR019833">
    <property type="entry name" value="Mn/Fe_SOD_BS"/>
</dbReference>
<dbReference type="InterPro" id="IPR019832">
    <property type="entry name" value="Mn/Fe_SOD_C"/>
</dbReference>
<dbReference type="InterPro" id="IPR019831">
    <property type="entry name" value="Mn/Fe_SOD_N"/>
</dbReference>
<dbReference type="InterPro" id="IPR036324">
    <property type="entry name" value="Mn/Fe_SOD_N_sf"/>
</dbReference>
<dbReference type="InterPro" id="IPR036314">
    <property type="entry name" value="SOD_C_sf"/>
</dbReference>
<dbReference type="PANTHER" id="PTHR11404">
    <property type="entry name" value="SUPEROXIDE DISMUTASE 2"/>
    <property type="match status" value="1"/>
</dbReference>
<dbReference type="PANTHER" id="PTHR11404:SF6">
    <property type="entry name" value="SUPEROXIDE DISMUTASE [MN], MITOCHONDRIAL"/>
    <property type="match status" value="1"/>
</dbReference>
<dbReference type="Pfam" id="PF02777">
    <property type="entry name" value="Sod_Fe_C"/>
    <property type="match status" value="1"/>
</dbReference>
<dbReference type="Pfam" id="PF00081">
    <property type="entry name" value="Sod_Fe_N"/>
    <property type="match status" value="1"/>
</dbReference>
<dbReference type="PIRSF" id="PIRSF000349">
    <property type="entry name" value="SODismutase"/>
    <property type="match status" value="1"/>
</dbReference>
<dbReference type="PRINTS" id="PR01703">
    <property type="entry name" value="MNSODISMTASE"/>
</dbReference>
<dbReference type="SUPFAM" id="SSF54719">
    <property type="entry name" value="Fe,Mn superoxide dismutase (SOD), C-terminal domain"/>
    <property type="match status" value="1"/>
</dbReference>
<dbReference type="SUPFAM" id="SSF46609">
    <property type="entry name" value="Fe,Mn superoxide dismutase (SOD), N-terminal domain"/>
    <property type="match status" value="1"/>
</dbReference>
<dbReference type="PROSITE" id="PS00088">
    <property type="entry name" value="SOD_MN"/>
    <property type="match status" value="1"/>
</dbReference>
<proteinExistence type="inferred from homology"/>
<name>SODM_MYCLE</name>
<accession>P13367</accession>
<feature type="initiator methionine" description="Removed" evidence="1">
    <location>
        <position position="1"/>
    </location>
</feature>
<feature type="chain" id="PRO_0000160052" description="Superoxide dismutase [Mn]">
    <location>
        <begin position="2"/>
        <end position="207"/>
    </location>
</feature>
<feature type="binding site" evidence="1">
    <location>
        <position position="28"/>
    </location>
    <ligand>
        <name>Mn(2+)</name>
        <dbReference type="ChEBI" id="CHEBI:29035"/>
    </ligand>
</feature>
<feature type="binding site" evidence="1">
    <location>
        <position position="76"/>
    </location>
    <ligand>
        <name>Mn(2+)</name>
        <dbReference type="ChEBI" id="CHEBI:29035"/>
    </ligand>
</feature>
<feature type="binding site" evidence="1">
    <location>
        <position position="160"/>
    </location>
    <ligand>
        <name>Mn(2+)</name>
        <dbReference type="ChEBI" id="CHEBI:29035"/>
    </ligand>
</feature>
<feature type="binding site" evidence="1">
    <location>
        <position position="164"/>
    </location>
    <ligand>
        <name>Mn(2+)</name>
        <dbReference type="ChEBI" id="CHEBI:29035"/>
    </ligand>
</feature>
<reference key="1">
    <citation type="journal article" date="1989" name="Nucleic Acids Res.">
        <title>Nucleotide and deduced amino acid sequence of Mycobacterium leprae manganese superoxide dismutase.</title>
        <authorList>
            <person name="Thangaraj H.S."/>
            <person name="Lamb F.I."/>
            <person name="Davis E.O."/>
            <person name="Colston M.J."/>
        </authorList>
    </citation>
    <scope>NUCLEOTIDE SEQUENCE [GENOMIC DNA]</scope>
</reference>
<reference key="2">
    <citation type="journal article" date="1990" name="Infect. Immun.">
        <title>Identification, sequencing, and expression of Mycobacterium leprae superoxide dismutase, a major antigen.</title>
        <authorList>
            <person name="Thangaraj H.S."/>
            <person name="Lamb F.I."/>
            <person name="Davis E.O."/>
            <person name="Jenner P.J."/>
            <person name="Jeyakumar L.H."/>
            <person name="Colston M.J."/>
        </authorList>
    </citation>
    <scope>NUCLEOTIDE SEQUENCE [GENOMIC DNA]</scope>
</reference>
<reference key="3">
    <citation type="journal article" date="2001" name="Nature">
        <title>Massive gene decay in the leprosy bacillus.</title>
        <authorList>
            <person name="Cole S.T."/>
            <person name="Eiglmeier K."/>
            <person name="Parkhill J."/>
            <person name="James K.D."/>
            <person name="Thomson N.R."/>
            <person name="Wheeler P.R."/>
            <person name="Honore N."/>
            <person name="Garnier T."/>
            <person name="Churcher C.M."/>
            <person name="Harris D.E."/>
            <person name="Mungall K.L."/>
            <person name="Basham D."/>
            <person name="Brown D."/>
            <person name="Chillingworth T."/>
            <person name="Connor R."/>
            <person name="Davies R.M."/>
            <person name="Devlin K."/>
            <person name="Duthoy S."/>
            <person name="Feltwell T."/>
            <person name="Fraser A."/>
            <person name="Hamlin N."/>
            <person name="Holroyd S."/>
            <person name="Hornsby T."/>
            <person name="Jagels K."/>
            <person name="Lacroix C."/>
            <person name="Maclean J."/>
            <person name="Moule S."/>
            <person name="Murphy L.D."/>
            <person name="Oliver K."/>
            <person name="Quail M.A."/>
            <person name="Rajandream M.A."/>
            <person name="Rutherford K.M."/>
            <person name="Rutter S."/>
            <person name="Seeger K."/>
            <person name="Simon S."/>
            <person name="Simmonds M."/>
            <person name="Skelton J."/>
            <person name="Squares R."/>
            <person name="Squares S."/>
            <person name="Stevens K."/>
            <person name="Taylor K."/>
            <person name="Whitehead S."/>
            <person name="Woodward J.R."/>
            <person name="Barrell B.G."/>
        </authorList>
    </citation>
    <scope>NUCLEOTIDE SEQUENCE [LARGE SCALE GENOMIC DNA]</scope>
    <source>
        <strain>TN</strain>
    </source>
</reference>
<evidence type="ECO:0000250" key="1"/>
<evidence type="ECO:0000305" key="2"/>
<gene>
    <name type="primary">sodA</name>
    <name type="ordered locus">ML0072</name>
</gene>
<keyword id="KW-0464">Manganese</keyword>
<keyword id="KW-0479">Metal-binding</keyword>
<keyword id="KW-0560">Oxidoreductase</keyword>
<keyword id="KW-1185">Reference proteome</keyword>
<organism>
    <name type="scientific">Mycobacterium leprae (strain TN)</name>
    <dbReference type="NCBI Taxonomy" id="272631"/>
    <lineage>
        <taxon>Bacteria</taxon>
        <taxon>Bacillati</taxon>
        <taxon>Actinomycetota</taxon>
        <taxon>Actinomycetes</taxon>
        <taxon>Mycobacteriales</taxon>
        <taxon>Mycobacteriaceae</taxon>
        <taxon>Mycobacterium</taxon>
    </lineage>
</organism>
<protein>
    <recommendedName>
        <fullName>Superoxide dismutase [Mn]</fullName>
        <ecNumber>1.15.1.1</ecNumber>
    </recommendedName>
</protein>
<comment type="function">
    <text>Destroys superoxide anion radicals which are normally produced within the cells and which are toxic to biological systems.</text>
</comment>
<comment type="catalytic activity">
    <reaction>
        <text>2 superoxide + 2 H(+) = H2O2 + O2</text>
        <dbReference type="Rhea" id="RHEA:20696"/>
        <dbReference type="ChEBI" id="CHEBI:15378"/>
        <dbReference type="ChEBI" id="CHEBI:15379"/>
        <dbReference type="ChEBI" id="CHEBI:16240"/>
        <dbReference type="ChEBI" id="CHEBI:18421"/>
        <dbReference type="EC" id="1.15.1.1"/>
    </reaction>
</comment>
<comment type="cofactor">
    <cofactor evidence="1">
        <name>Mn(2+)</name>
        <dbReference type="ChEBI" id="CHEBI:29035"/>
    </cofactor>
    <text evidence="1">Binds 1 Mn(2+) ion per subunit.</text>
</comment>
<comment type="similarity">
    <text evidence="2">Belongs to the iron/manganese superoxide dismutase family.</text>
</comment>
<sequence length="207" mass="23158">MAEYTLPDLDWDYAALEPHISGEINEIHHTKHHAAYVKGVNDALAKLDEARAKDDHSAIFLNEKNLAFHLGGHVNHSIWWKNLSPNGGDKPTGGLATDIDETFGSFDKFRAQFSAAANGLQGSGWAVLGYDTLGNKLLTFQLYDQQANVSLGIIPLLQVDMWEHAFYLQYKNVKADYVKAFWNVVNWADVQSRYMAATSKTQGLIFD</sequence>